<feature type="chain" id="PRO_1000133868" description="Endonuclease V">
    <location>
        <begin position="1"/>
        <end position="228"/>
    </location>
</feature>
<feature type="binding site" evidence="1">
    <location>
        <position position="43"/>
    </location>
    <ligand>
        <name>Mg(2+)</name>
        <dbReference type="ChEBI" id="CHEBI:18420"/>
    </ligand>
</feature>
<feature type="binding site" evidence="1">
    <location>
        <position position="109"/>
    </location>
    <ligand>
        <name>Mg(2+)</name>
        <dbReference type="ChEBI" id="CHEBI:18420"/>
    </ligand>
</feature>
<feature type="site" description="Interaction with target DNA" evidence="1">
    <location>
        <position position="79"/>
    </location>
</feature>
<proteinExistence type="inferred from homology"/>
<name>NFI_DICT6</name>
<dbReference type="EC" id="3.1.21.7" evidence="1"/>
<dbReference type="EMBL" id="CP001146">
    <property type="protein sequence ID" value="ACI20107.1"/>
    <property type="molecule type" value="Genomic_DNA"/>
</dbReference>
<dbReference type="RefSeq" id="WP_012548739.1">
    <property type="nucleotide sequence ID" value="NC_011297.1"/>
</dbReference>
<dbReference type="SMR" id="B5YD80"/>
<dbReference type="STRING" id="309799.DICTH_0609"/>
<dbReference type="PaxDb" id="309799-DICTH_0609"/>
<dbReference type="KEGG" id="dth:DICTH_0609"/>
<dbReference type="eggNOG" id="COG1515">
    <property type="taxonomic scope" value="Bacteria"/>
</dbReference>
<dbReference type="HOGENOM" id="CLU_047631_1_1_0"/>
<dbReference type="OrthoDB" id="9790916at2"/>
<dbReference type="Proteomes" id="UP000001733">
    <property type="component" value="Chromosome"/>
</dbReference>
<dbReference type="GO" id="GO:0005737">
    <property type="term" value="C:cytoplasm"/>
    <property type="evidence" value="ECO:0007669"/>
    <property type="project" value="UniProtKB-SubCell"/>
</dbReference>
<dbReference type="GO" id="GO:0043737">
    <property type="term" value="F:deoxyribonuclease V activity"/>
    <property type="evidence" value="ECO:0007669"/>
    <property type="project" value="UniProtKB-UniRule"/>
</dbReference>
<dbReference type="GO" id="GO:0000287">
    <property type="term" value="F:magnesium ion binding"/>
    <property type="evidence" value="ECO:0007669"/>
    <property type="project" value="UniProtKB-UniRule"/>
</dbReference>
<dbReference type="GO" id="GO:0016891">
    <property type="term" value="F:RNA endonuclease activity, producing 5'-phosphomonoesters"/>
    <property type="evidence" value="ECO:0007669"/>
    <property type="project" value="TreeGrafter"/>
</dbReference>
<dbReference type="GO" id="GO:0003727">
    <property type="term" value="F:single-stranded RNA binding"/>
    <property type="evidence" value="ECO:0007669"/>
    <property type="project" value="TreeGrafter"/>
</dbReference>
<dbReference type="GO" id="GO:0006281">
    <property type="term" value="P:DNA repair"/>
    <property type="evidence" value="ECO:0007669"/>
    <property type="project" value="UniProtKB-UniRule"/>
</dbReference>
<dbReference type="CDD" id="cd06559">
    <property type="entry name" value="Endonuclease_V"/>
    <property type="match status" value="1"/>
</dbReference>
<dbReference type="FunFam" id="3.30.2170.10:FF:000008">
    <property type="entry name" value="Endonuclease V"/>
    <property type="match status" value="1"/>
</dbReference>
<dbReference type="Gene3D" id="3.30.2170.10">
    <property type="entry name" value="archaeoglobus fulgidus dsm 4304 superfamily"/>
    <property type="match status" value="1"/>
</dbReference>
<dbReference type="HAMAP" id="MF_00801">
    <property type="entry name" value="Endonuclease_5"/>
    <property type="match status" value="1"/>
</dbReference>
<dbReference type="InterPro" id="IPR007581">
    <property type="entry name" value="Endonuclease-V"/>
</dbReference>
<dbReference type="NCBIfam" id="NF008629">
    <property type="entry name" value="PRK11617.1"/>
    <property type="match status" value="1"/>
</dbReference>
<dbReference type="PANTHER" id="PTHR28511">
    <property type="entry name" value="ENDONUCLEASE V"/>
    <property type="match status" value="1"/>
</dbReference>
<dbReference type="PANTHER" id="PTHR28511:SF1">
    <property type="entry name" value="ENDONUCLEASE V"/>
    <property type="match status" value="1"/>
</dbReference>
<dbReference type="Pfam" id="PF04493">
    <property type="entry name" value="Endonuclease_5"/>
    <property type="match status" value="1"/>
</dbReference>
<reference key="1">
    <citation type="journal article" date="2014" name="Genome Announc.">
        <title>Complete Genome Sequence of the Extreme Thermophile Dictyoglomus thermophilum H-6-12.</title>
        <authorList>
            <person name="Coil D.A."/>
            <person name="Badger J.H."/>
            <person name="Forberger H.C."/>
            <person name="Riggs F."/>
            <person name="Madupu R."/>
            <person name="Fedorova N."/>
            <person name="Ward N."/>
            <person name="Robb F.T."/>
            <person name="Eisen J.A."/>
        </authorList>
    </citation>
    <scope>NUCLEOTIDE SEQUENCE [LARGE SCALE GENOMIC DNA]</scope>
    <source>
        <strain>ATCC 35947 / DSM 3960 / H-6-12</strain>
    </source>
</reference>
<accession>B5YD80</accession>
<comment type="function">
    <text evidence="1">DNA repair enzyme involved in the repair of deaminated bases. Selectively cleaves double-stranded DNA at the second phosphodiester bond 3' to a deoxyinosine leaving behind the intact lesion on the nicked DNA.</text>
</comment>
<comment type="catalytic activity">
    <reaction evidence="1">
        <text>Endonucleolytic cleavage at apurinic or apyrimidinic sites to products with a 5'-phosphate.</text>
        <dbReference type="EC" id="3.1.21.7"/>
    </reaction>
</comment>
<comment type="cofactor">
    <cofactor evidence="1">
        <name>Mg(2+)</name>
        <dbReference type="ChEBI" id="CHEBI:18420"/>
    </cofactor>
</comment>
<comment type="subcellular location">
    <subcellularLocation>
        <location evidence="1">Cytoplasm</location>
    </subcellularLocation>
</comment>
<comment type="similarity">
    <text evidence="1">Belongs to the endonuclease V family.</text>
</comment>
<gene>
    <name evidence="1" type="primary">nfi</name>
    <name type="ordered locus">DICTH_0609</name>
</gene>
<organism>
    <name type="scientific">Dictyoglomus thermophilum (strain ATCC 35947 / DSM 3960 / H-6-12)</name>
    <dbReference type="NCBI Taxonomy" id="309799"/>
    <lineage>
        <taxon>Bacteria</taxon>
        <taxon>Pseudomonadati</taxon>
        <taxon>Dictyoglomota</taxon>
        <taxon>Dictyoglomia</taxon>
        <taxon>Dictyoglomales</taxon>
        <taxon>Dictyoglomaceae</taxon>
        <taxon>Dictyoglomus</taxon>
    </lineage>
</organism>
<evidence type="ECO:0000255" key="1">
    <source>
        <dbReference type="HAMAP-Rule" id="MF_00801"/>
    </source>
</evidence>
<keyword id="KW-0963">Cytoplasm</keyword>
<keyword id="KW-0227">DNA damage</keyword>
<keyword id="KW-0234">DNA repair</keyword>
<keyword id="KW-0255">Endonuclease</keyword>
<keyword id="KW-0378">Hydrolase</keyword>
<keyword id="KW-0460">Magnesium</keyword>
<keyword id="KW-0479">Metal-binding</keyword>
<keyword id="KW-0540">Nuclease</keyword>
<protein>
    <recommendedName>
        <fullName evidence="1">Endonuclease V</fullName>
        <ecNumber evidence="1">3.1.21.7</ecNumber>
    </recommendedName>
    <alternativeName>
        <fullName evidence="1">Deoxyinosine 3'endonuclease</fullName>
    </alternativeName>
    <alternativeName>
        <fullName evidence="1">Deoxyribonuclease V</fullName>
        <shortName evidence="1">DNase V</shortName>
    </alternativeName>
</protein>
<sequence length="228" mass="25848">MDYESKYFKWLGYEETVRLQKEISEKIIKEDAFKNLRYVGGVDTSSIEDKIAGVIVVLEFNTLEVLEVSIEISQVNFPYIPGFLSFREGPIILKAWENLKIKPDLLIFDGQGIAHPRRLGIASHVGYVLDVPSIGCAKKILVGVYKEPDKKRGSFEYIYIDNEIVGAVVRTKDNVKPVFVSLGHKISLSTSIEIILKTSTKYRLPEPVRLAHIYSKKALNFEIKGELL</sequence>